<name>RS4_CITK8</name>
<evidence type="ECO:0000255" key="1">
    <source>
        <dbReference type="HAMAP-Rule" id="MF_01306"/>
    </source>
</evidence>
<evidence type="ECO:0000305" key="2"/>
<sequence>MARYLGPKLKLSRREGTDLFLKSGVRAIDTKCKIEQAPGQHGARKPRLSDYGVQLREKQKVRRIYGVLERQFRNYYKEAARLKGNTGENLLALLEGRLDNVVYRMGFGATRAEARQLVSHKAIMVNGRVVNIASYQVSPNDVVSIREKAKKQSRVKAALELAEQREKPTWLEVDAGKMEGTFKRKPERSDLSADINEHLIVELYSK</sequence>
<gene>
    <name evidence="1" type="primary">rpsD</name>
    <name type="ordered locus">CKO_04709</name>
</gene>
<proteinExistence type="inferred from homology"/>
<organism>
    <name type="scientific">Citrobacter koseri (strain ATCC BAA-895 / CDC 4225-83 / SGSC4696)</name>
    <dbReference type="NCBI Taxonomy" id="290338"/>
    <lineage>
        <taxon>Bacteria</taxon>
        <taxon>Pseudomonadati</taxon>
        <taxon>Pseudomonadota</taxon>
        <taxon>Gammaproteobacteria</taxon>
        <taxon>Enterobacterales</taxon>
        <taxon>Enterobacteriaceae</taxon>
        <taxon>Citrobacter</taxon>
    </lineage>
</organism>
<keyword id="KW-1185">Reference proteome</keyword>
<keyword id="KW-0687">Ribonucleoprotein</keyword>
<keyword id="KW-0689">Ribosomal protein</keyword>
<keyword id="KW-0694">RNA-binding</keyword>
<keyword id="KW-0699">rRNA-binding</keyword>
<protein>
    <recommendedName>
        <fullName evidence="1">Small ribosomal subunit protein uS4</fullName>
    </recommendedName>
    <alternativeName>
        <fullName evidence="2">30S ribosomal protein S4</fullName>
    </alternativeName>
</protein>
<dbReference type="EMBL" id="CP000822">
    <property type="protein sequence ID" value="ABV15754.1"/>
    <property type="molecule type" value="Genomic_DNA"/>
</dbReference>
<dbReference type="RefSeq" id="WP_000135224.1">
    <property type="nucleotide sequence ID" value="NC_009792.1"/>
</dbReference>
<dbReference type="SMR" id="A8AQJ1"/>
<dbReference type="STRING" id="290338.CKO_04709"/>
<dbReference type="GeneID" id="93778691"/>
<dbReference type="KEGG" id="cko:CKO_04709"/>
<dbReference type="HOGENOM" id="CLU_092403_0_2_6"/>
<dbReference type="OrthoDB" id="9803672at2"/>
<dbReference type="Proteomes" id="UP000008148">
    <property type="component" value="Chromosome"/>
</dbReference>
<dbReference type="GO" id="GO:0015935">
    <property type="term" value="C:small ribosomal subunit"/>
    <property type="evidence" value="ECO:0007669"/>
    <property type="project" value="InterPro"/>
</dbReference>
<dbReference type="GO" id="GO:0019843">
    <property type="term" value="F:rRNA binding"/>
    <property type="evidence" value="ECO:0007669"/>
    <property type="project" value="UniProtKB-UniRule"/>
</dbReference>
<dbReference type="GO" id="GO:0003735">
    <property type="term" value="F:structural constituent of ribosome"/>
    <property type="evidence" value="ECO:0007669"/>
    <property type="project" value="InterPro"/>
</dbReference>
<dbReference type="GO" id="GO:0042274">
    <property type="term" value="P:ribosomal small subunit biogenesis"/>
    <property type="evidence" value="ECO:0007669"/>
    <property type="project" value="TreeGrafter"/>
</dbReference>
<dbReference type="GO" id="GO:0006412">
    <property type="term" value="P:translation"/>
    <property type="evidence" value="ECO:0007669"/>
    <property type="project" value="UniProtKB-UniRule"/>
</dbReference>
<dbReference type="CDD" id="cd00165">
    <property type="entry name" value="S4"/>
    <property type="match status" value="1"/>
</dbReference>
<dbReference type="FunFam" id="1.10.1050.10:FF:000001">
    <property type="entry name" value="30S ribosomal protein S4"/>
    <property type="match status" value="1"/>
</dbReference>
<dbReference type="FunFam" id="3.10.290.10:FF:000001">
    <property type="entry name" value="30S ribosomal protein S4"/>
    <property type="match status" value="1"/>
</dbReference>
<dbReference type="Gene3D" id="1.10.1050.10">
    <property type="entry name" value="Ribosomal Protein S4 Delta 41, Chain A, domain 1"/>
    <property type="match status" value="1"/>
</dbReference>
<dbReference type="Gene3D" id="3.10.290.10">
    <property type="entry name" value="RNA-binding S4 domain"/>
    <property type="match status" value="1"/>
</dbReference>
<dbReference type="HAMAP" id="MF_01306_B">
    <property type="entry name" value="Ribosomal_uS4_B"/>
    <property type="match status" value="1"/>
</dbReference>
<dbReference type="InterPro" id="IPR022801">
    <property type="entry name" value="Ribosomal_uS4"/>
</dbReference>
<dbReference type="InterPro" id="IPR005709">
    <property type="entry name" value="Ribosomal_uS4_bac-type"/>
</dbReference>
<dbReference type="InterPro" id="IPR018079">
    <property type="entry name" value="Ribosomal_uS4_CS"/>
</dbReference>
<dbReference type="InterPro" id="IPR001912">
    <property type="entry name" value="Ribosomal_uS4_N"/>
</dbReference>
<dbReference type="InterPro" id="IPR002942">
    <property type="entry name" value="S4_RNA-bd"/>
</dbReference>
<dbReference type="InterPro" id="IPR036986">
    <property type="entry name" value="S4_RNA-bd_sf"/>
</dbReference>
<dbReference type="NCBIfam" id="NF003717">
    <property type="entry name" value="PRK05327.1"/>
    <property type="match status" value="1"/>
</dbReference>
<dbReference type="NCBIfam" id="TIGR01017">
    <property type="entry name" value="rpsD_bact"/>
    <property type="match status" value="1"/>
</dbReference>
<dbReference type="PANTHER" id="PTHR11831">
    <property type="entry name" value="30S 40S RIBOSOMAL PROTEIN"/>
    <property type="match status" value="1"/>
</dbReference>
<dbReference type="PANTHER" id="PTHR11831:SF4">
    <property type="entry name" value="SMALL RIBOSOMAL SUBUNIT PROTEIN US4M"/>
    <property type="match status" value="1"/>
</dbReference>
<dbReference type="Pfam" id="PF00163">
    <property type="entry name" value="Ribosomal_S4"/>
    <property type="match status" value="1"/>
</dbReference>
<dbReference type="Pfam" id="PF01479">
    <property type="entry name" value="S4"/>
    <property type="match status" value="1"/>
</dbReference>
<dbReference type="SMART" id="SM01390">
    <property type="entry name" value="Ribosomal_S4"/>
    <property type="match status" value="1"/>
</dbReference>
<dbReference type="SMART" id="SM00363">
    <property type="entry name" value="S4"/>
    <property type="match status" value="1"/>
</dbReference>
<dbReference type="SUPFAM" id="SSF55174">
    <property type="entry name" value="Alpha-L RNA-binding motif"/>
    <property type="match status" value="1"/>
</dbReference>
<dbReference type="PROSITE" id="PS00632">
    <property type="entry name" value="RIBOSOMAL_S4"/>
    <property type="match status" value="1"/>
</dbReference>
<dbReference type="PROSITE" id="PS50889">
    <property type="entry name" value="S4"/>
    <property type="match status" value="1"/>
</dbReference>
<accession>A8AQJ1</accession>
<comment type="function">
    <text evidence="1">One of the primary rRNA binding proteins, it binds directly to 16S rRNA where it nucleates assembly of the body of the 30S subunit.</text>
</comment>
<comment type="function">
    <text evidence="1">With S5 and S12 plays an important role in translational accuracy.</text>
</comment>
<comment type="subunit">
    <text evidence="1">Part of the 30S ribosomal subunit. Contacts protein S5. The interaction surface between S4 and S5 is involved in control of translational fidelity.</text>
</comment>
<comment type="similarity">
    <text evidence="1">Belongs to the universal ribosomal protein uS4 family.</text>
</comment>
<feature type="chain" id="PRO_0000322284" description="Small ribosomal subunit protein uS4">
    <location>
        <begin position="1"/>
        <end position="206"/>
    </location>
</feature>
<feature type="domain" description="S4 RNA-binding" evidence="1">
    <location>
        <begin position="96"/>
        <end position="156"/>
    </location>
</feature>
<reference key="1">
    <citation type="submission" date="2007-08" db="EMBL/GenBank/DDBJ databases">
        <authorList>
            <consortium name="The Citrobacter koseri Genome Sequencing Project"/>
            <person name="McClelland M."/>
            <person name="Sanderson E.K."/>
            <person name="Porwollik S."/>
            <person name="Spieth J."/>
            <person name="Clifton W.S."/>
            <person name="Latreille P."/>
            <person name="Courtney L."/>
            <person name="Wang C."/>
            <person name="Pepin K."/>
            <person name="Bhonagiri V."/>
            <person name="Nash W."/>
            <person name="Johnson M."/>
            <person name="Thiruvilangam P."/>
            <person name="Wilson R."/>
        </authorList>
    </citation>
    <scope>NUCLEOTIDE SEQUENCE [LARGE SCALE GENOMIC DNA]</scope>
    <source>
        <strain>ATCC BAA-895 / CDC 4225-83 / SGSC4696</strain>
    </source>
</reference>